<evidence type="ECO:0000255" key="1">
    <source>
        <dbReference type="HAMAP-Rule" id="MF_01576"/>
    </source>
</evidence>
<organism>
    <name type="scientific">Campylobacter jejuni subsp. jejuni serotype O:23/36 (strain 81-176)</name>
    <dbReference type="NCBI Taxonomy" id="354242"/>
    <lineage>
        <taxon>Bacteria</taxon>
        <taxon>Pseudomonadati</taxon>
        <taxon>Campylobacterota</taxon>
        <taxon>Epsilonproteobacteria</taxon>
        <taxon>Campylobacterales</taxon>
        <taxon>Campylobacteraceae</taxon>
        <taxon>Campylobacter</taxon>
    </lineage>
</organism>
<name>FOLD_CAMJJ</name>
<sequence length="282" mass="30337">MTLLDGKALSAKIKEELKEKNQFLKSKGIESCLAVILVGDNPASQTYVKSKAKACEECGIKSLVYHLNENTTQNELLALINTLNHDDSVHGILVQLPLPDHICKDLILESIISSKDVDGFHPINVGYLNLGLESGFLPCTPLGVMKLLKAYEIDLEGKDAVIIGASNIVGRPMATMLLNAGATVSVCHIKTKDLSLYTRQADLIIVAAGCVNLLRSDMVKEGVIVVDVGINRLESGKIVGDVDFEEVSKKSSYITPVPGGVGPMTIAMLLENTVKSAKNRLN</sequence>
<feature type="chain" id="PRO_0000305806" description="Bifunctional protein FolD">
    <location>
        <begin position="1"/>
        <end position="282"/>
    </location>
</feature>
<feature type="binding site" evidence="1">
    <location>
        <begin position="164"/>
        <end position="166"/>
    </location>
    <ligand>
        <name>NADP(+)</name>
        <dbReference type="ChEBI" id="CHEBI:58349"/>
    </ligand>
</feature>
<feature type="binding site" evidence="1">
    <location>
        <position position="189"/>
    </location>
    <ligand>
        <name>NADP(+)</name>
        <dbReference type="ChEBI" id="CHEBI:58349"/>
    </ligand>
</feature>
<feature type="binding site" evidence="1">
    <location>
        <position position="230"/>
    </location>
    <ligand>
        <name>NADP(+)</name>
        <dbReference type="ChEBI" id="CHEBI:58349"/>
    </ligand>
</feature>
<protein>
    <recommendedName>
        <fullName evidence="1">Bifunctional protein FolD</fullName>
    </recommendedName>
    <domain>
        <recommendedName>
            <fullName evidence="1">Methylenetetrahydrofolate dehydrogenase</fullName>
            <ecNumber evidence="1">1.5.1.5</ecNumber>
        </recommendedName>
    </domain>
    <domain>
        <recommendedName>
            <fullName evidence="1">Methenyltetrahydrofolate cyclohydrolase</fullName>
            <ecNumber evidence="1">3.5.4.9</ecNumber>
        </recommendedName>
    </domain>
</protein>
<proteinExistence type="inferred from homology"/>
<dbReference type="EC" id="1.5.1.5" evidence="1"/>
<dbReference type="EC" id="3.5.4.9" evidence="1"/>
<dbReference type="EMBL" id="CP000538">
    <property type="protein sequence ID" value="EAQ72437.1"/>
    <property type="molecule type" value="Genomic_DNA"/>
</dbReference>
<dbReference type="RefSeq" id="WP_002852542.1">
    <property type="nucleotide sequence ID" value="NC_008787.1"/>
</dbReference>
<dbReference type="SMR" id="A1VZJ8"/>
<dbReference type="KEGG" id="cjj:CJJ81176_0871"/>
<dbReference type="eggNOG" id="COG0190">
    <property type="taxonomic scope" value="Bacteria"/>
</dbReference>
<dbReference type="HOGENOM" id="CLU_034045_2_1_7"/>
<dbReference type="UniPathway" id="UPA00193"/>
<dbReference type="Proteomes" id="UP000000646">
    <property type="component" value="Chromosome"/>
</dbReference>
<dbReference type="GO" id="GO:0005829">
    <property type="term" value="C:cytosol"/>
    <property type="evidence" value="ECO:0007669"/>
    <property type="project" value="TreeGrafter"/>
</dbReference>
<dbReference type="GO" id="GO:0004477">
    <property type="term" value="F:methenyltetrahydrofolate cyclohydrolase activity"/>
    <property type="evidence" value="ECO:0007669"/>
    <property type="project" value="UniProtKB-UniRule"/>
</dbReference>
<dbReference type="GO" id="GO:0004488">
    <property type="term" value="F:methylenetetrahydrofolate dehydrogenase (NADP+) activity"/>
    <property type="evidence" value="ECO:0007669"/>
    <property type="project" value="UniProtKB-UniRule"/>
</dbReference>
<dbReference type="GO" id="GO:0000105">
    <property type="term" value="P:L-histidine biosynthetic process"/>
    <property type="evidence" value="ECO:0007669"/>
    <property type="project" value="UniProtKB-KW"/>
</dbReference>
<dbReference type="GO" id="GO:0009086">
    <property type="term" value="P:methionine biosynthetic process"/>
    <property type="evidence" value="ECO:0007669"/>
    <property type="project" value="UniProtKB-KW"/>
</dbReference>
<dbReference type="GO" id="GO:0006164">
    <property type="term" value="P:purine nucleotide biosynthetic process"/>
    <property type="evidence" value="ECO:0007669"/>
    <property type="project" value="UniProtKB-KW"/>
</dbReference>
<dbReference type="GO" id="GO:0035999">
    <property type="term" value="P:tetrahydrofolate interconversion"/>
    <property type="evidence" value="ECO:0007669"/>
    <property type="project" value="UniProtKB-UniRule"/>
</dbReference>
<dbReference type="CDD" id="cd01080">
    <property type="entry name" value="NAD_bind_m-THF_DH_Cyclohyd"/>
    <property type="match status" value="1"/>
</dbReference>
<dbReference type="FunFam" id="3.40.50.720:FF:000094">
    <property type="entry name" value="Bifunctional protein FolD"/>
    <property type="match status" value="1"/>
</dbReference>
<dbReference type="FunFam" id="3.40.50.10860:FF:000005">
    <property type="entry name" value="C-1-tetrahydrofolate synthase, cytoplasmic, putative"/>
    <property type="match status" value="1"/>
</dbReference>
<dbReference type="Gene3D" id="3.40.50.10860">
    <property type="entry name" value="Leucine Dehydrogenase, chain A, domain 1"/>
    <property type="match status" value="1"/>
</dbReference>
<dbReference type="Gene3D" id="3.40.50.720">
    <property type="entry name" value="NAD(P)-binding Rossmann-like Domain"/>
    <property type="match status" value="1"/>
</dbReference>
<dbReference type="HAMAP" id="MF_01576">
    <property type="entry name" value="THF_DHG_CYH"/>
    <property type="match status" value="1"/>
</dbReference>
<dbReference type="InterPro" id="IPR046346">
    <property type="entry name" value="Aminoacid_DH-like_N_sf"/>
</dbReference>
<dbReference type="InterPro" id="IPR036291">
    <property type="entry name" value="NAD(P)-bd_dom_sf"/>
</dbReference>
<dbReference type="InterPro" id="IPR000672">
    <property type="entry name" value="THF_DH/CycHdrlase"/>
</dbReference>
<dbReference type="InterPro" id="IPR020630">
    <property type="entry name" value="THF_DH/CycHdrlase_cat_dom"/>
</dbReference>
<dbReference type="InterPro" id="IPR020867">
    <property type="entry name" value="THF_DH/CycHdrlase_CS"/>
</dbReference>
<dbReference type="InterPro" id="IPR020631">
    <property type="entry name" value="THF_DH/CycHdrlase_NAD-bd_dom"/>
</dbReference>
<dbReference type="NCBIfam" id="NF008058">
    <property type="entry name" value="PRK10792.1"/>
    <property type="match status" value="1"/>
</dbReference>
<dbReference type="NCBIfam" id="NF010763">
    <property type="entry name" value="PRK14166.1"/>
    <property type="match status" value="1"/>
</dbReference>
<dbReference type="NCBIfam" id="NF010783">
    <property type="entry name" value="PRK14186.1"/>
    <property type="match status" value="1"/>
</dbReference>
<dbReference type="NCBIfam" id="NF010787">
    <property type="entry name" value="PRK14191.1"/>
    <property type="match status" value="1"/>
</dbReference>
<dbReference type="PANTHER" id="PTHR48099:SF5">
    <property type="entry name" value="C-1-TETRAHYDROFOLATE SYNTHASE, CYTOPLASMIC"/>
    <property type="match status" value="1"/>
</dbReference>
<dbReference type="PANTHER" id="PTHR48099">
    <property type="entry name" value="C-1-TETRAHYDROFOLATE SYNTHASE, CYTOPLASMIC-RELATED"/>
    <property type="match status" value="1"/>
</dbReference>
<dbReference type="Pfam" id="PF00763">
    <property type="entry name" value="THF_DHG_CYH"/>
    <property type="match status" value="1"/>
</dbReference>
<dbReference type="Pfam" id="PF02882">
    <property type="entry name" value="THF_DHG_CYH_C"/>
    <property type="match status" value="1"/>
</dbReference>
<dbReference type="PRINTS" id="PR00085">
    <property type="entry name" value="THFDHDRGNASE"/>
</dbReference>
<dbReference type="SUPFAM" id="SSF53223">
    <property type="entry name" value="Aminoacid dehydrogenase-like, N-terminal domain"/>
    <property type="match status" value="1"/>
</dbReference>
<dbReference type="SUPFAM" id="SSF51735">
    <property type="entry name" value="NAD(P)-binding Rossmann-fold domains"/>
    <property type="match status" value="1"/>
</dbReference>
<dbReference type="PROSITE" id="PS00766">
    <property type="entry name" value="THF_DHG_CYH_1"/>
    <property type="match status" value="1"/>
</dbReference>
<dbReference type="PROSITE" id="PS00767">
    <property type="entry name" value="THF_DHG_CYH_2"/>
    <property type="match status" value="1"/>
</dbReference>
<comment type="function">
    <text evidence="1">Catalyzes the oxidation of 5,10-methylenetetrahydrofolate to 5,10-methenyltetrahydrofolate and then the hydrolysis of 5,10-methenyltetrahydrofolate to 10-formyltetrahydrofolate.</text>
</comment>
<comment type="catalytic activity">
    <reaction evidence="1">
        <text>(6R)-5,10-methylene-5,6,7,8-tetrahydrofolate + NADP(+) = (6R)-5,10-methenyltetrahydrofolate + NADPH</text>
        <dbReference type="Rhea" id="RHEA:22812"/>
        <dbReference type="ChEBI" id="CHEBI:15636"/>
        <dbReference type="ChEBI" id="CHEBI:57455"/>
        <dbReference type="ChEBI" id="CHEBI:57783"/>
        <dbReference type="ChEBI" id="CHEBI:58349"/>
        <dbReference type="EC" id="1.5.1.5"/>
    </reaction>
</comment>
<comment type="catalytic activity">
    <reaction evidence="1">
        <text>(6R)-5,10-methenyltetrahydrofolate + H2O = (6R)-10-formyltetrahydrofolate + H(+)</text>
        <dbReference type="Rhea" id="RHEA:23700"/>
        <dbReference type="ChEBI" id="CHEBI:15377"/>
        <dbReference type="ChEBI" id="CHEBI:15378"/>
        <dbReference type="ChEBI" id="CHEBI:57455"/>
        <dbReference type="ChEBI" id="CHEBI:195366"/>
        <dbReference type="EC" id="3.5.4.9"/>
    </reaction>
</comment>
<comment type="pathway">
    <text evidence="1">One-carbon metabolism; tetrahydrofolate interconversion.</text>
</comment>
<comment type="subunit">
    <text evidence="1">Homodimer.</text>
</comment>
<comment type="similarity">
    <text evidence="1">Belongs to the tetrahydrofolate dehydrogenase/cyclohydrolase family.</text>
</comment>
<keyword id="KW-0028">Amino-acid biosynthesis</keyword>
<keyword id="KW-0368">Histidine biosynthesis</keyword>
<keyword id="KW-0378">Hydrolase</keyword>
<keyword id="KW-0486">Methionine biosynthesis</keyword>
<keyword id="KW-0511">Multifunctional enzyme</keyword>
<keyword id="KW-0521">NADP</keyword>
<keyword id="KW-0554">One-carbon metabolism</keyword>
<keyword id="KW-0560">Oxidoreductase</keyword>
<keyword id="KW-0658">Purine biosynthesis</keyword>
<reference key="1">
    <citation type="submission" date="2006-12" db="EMBL/GenBank/DDBJ databases">
        <authorList>
            <person name="Fouts D.E."/>
            <person name="Nelson K.E."/>
            <person name="Sebastian Y."/>
        </authorList>
    </citation>
    <scope>NUCLEOTIDE SEQUENCE [LARGE SCALE GENOMIC DNA]</scope>
    <source>
        <strain>81-176</strain>
    </source>
</reference>
<accession>A1VZJ8</accession>
<gene>
    <name evidence="1" type="primary">folD</name>
    <name type="ordered locus">CJJ81176_0871</name>
</gene>